<protein>
    <recommendedName>
        <fullName>F-box protein At4g11590</fullName>
    </recommendedName>
</protein>
<feature type="chain" id="PRO_0000283500" description="F-box protein At4g11590">
    <location>
        <begin position="1"/>
        <end position="397"/>
    </location>
</feature>
<feature type="domain" description="F-box">
    <location>
        <begin position="24"/>
        <end position="70"/>
    </location>
</feature>
<name>FB231_ARATH</name>
<evidence type="ECO:0000250" key="1"/>
<evidence type="ECO:0000269" key="2">
    <source>
    </source>
</evidence>
<organism>
    <name type="scientific">Arabidopsis thaliana</name>
    <name type="common">Mouse-ear cress</name>
    <dbReference type="NCBI Taxonomy" id="3702"/>
    <lineage>
        <taxon>Eukaryota</taxon>
        <taxon>Viridiplantae</taxon>
        <taxon>Streptophyta</taxon>
        <taxon>Embryophyta</taxon>
        <taxon>Tracheophyta</taxon>
        <taxon>Spermatophyta</taxon>
        <taxon>Magnoliopsida</taxon>
        <taxon>eudicotyledons</taxon>
        <taxon>Gunneridae</taxon>
        <taxon>Pentapetalae</taxon>
        <taxon>rosids</taxon>
        <taxon>malvids</taxon>
        <taxon>Brassicales</taxon>
        <taxon>Brassicaceae</taxon>
        <taxon>Camelineae</taxon>
        <taxon>Arabidopsis</taxon>
    </lineage>
</organism>
<dbReference type="EMBL" id="AL049500">
    <property type="protein sequence ID" value="CAB39930.1"/>
    <property type="molecule type" value="Genomic_DNA"/>
</dbReference>
<dbReference type="EMBL" id="AL161532">
    <property type="protein sequence ID" value="CAB78202.1"/>
    <property type="molecule type" value="Genomic_DNA"/>
</dbReference>
<dbReference type="EMBL" id="CP002687">
    <property type="protein sequence ID" value="AEE83028.1"/>
    <property type="molecule type" value="Genomic_DNA"/>
</dbReference>
<dbReference type="PIR" id="T04206">
    <property type="entry name" value="T04206"/>
</dbReference>
<dbReference type="RefSeq" id="NP_192896.1">
    <property type="nucleotide sequence ID" value="NM_117228.1"/>
</dbReference>
<dbReference type="SMR" id="Q9T0C7"/>
<dbReference type="BioGRID" id="12063">
    <property type="interactions" value="1"/>
</dbReference>
<dbReference type="FunCoup" id="Q9T0C7">
    <property type="interactions" value="19"/>
</dbReference>
<dbReference type="IntAct" id="Q9T0C7">
    <property type="interactions" value="1"/>
</dbReference>
<dbReference type="STRING" id="3702.Q9T0C7"/>
<dbReference type="iPTMnet" id="Q9T0C7"/>
<dbReference type="PaxDb" id="3702-AT4G11590.1"/>
<dbReference type="DNASU" id="826764"/>
<dbReference type="EnsemblPlants" id="AT4G11590.1">
    <property type="protein sequence ID" value="AT4G11590.1"/>
    <property type="gene ID" value="AT4G11590"/>
</dbReference>
<dbReference type="GeneID" id="826764"/>
<dbReference type="Gramene" id="AT4G11590.1">
    <property type="protein sequence ID" value="AT4G11590.1"/>
    <property type="gene ID" value="AT4G11590"/>
</dbReference>
<dbReference type="KEGG" id="ath:AT4G11590"/>
<dbReference type="Araport" id="AT4G11590"/>
<dbReference type="TAIR" id="AT4G11590"/>
<dbReference type="eggNOG" id="ENOG502SXXQ">
    <property type="taxonomic scope" value="Eukaryota"/>
</dbReference>
<dbReference type="HOGENOM" id="CLU_027176_8_0_1"/>
<dbReference type="InParanoid" id="Q9T0C7"/>
<dbReference type="OMA" id="EDCTLIN"/>
<dbReference type="PhylomeDB" id="Q9T0C7"/>
<dbReference type="UniPathway" id="UPA00143"/>
<dbReference type="PRO" id="PR:Q9T0C7"/>
<dbReference type="Proteomes" id="UP000006548">
    <property type="component" value="Chromosome 4"/>
</dbReference>
<dbReference type="ExpressionAtlas" id="Q9T0C7">
    <property type="expression patterns" value="baseline and differential"/>
</dbReference>
<dbReference type="GO" id="GO:0005634">
    <property type="term" value="C:nucleus"/>
    <property type="evidence" value="ECO:0007669"/>
    <property type="project" value="UniProtKB-SubCell"/>
</dbReference>
<dbReference type="GO" id="GO:0016567">
    <property type="term" value="P:protein ubiquitination"/>
    <property type="evidence" value="ECO:0007669"/>
    <property type="project" value="UniProtKB-UniPathway"/>
</dbReference>
<dbReference type="InterPro" id="IPR013187">
    <property type="entry name" value="F-box-assoc_dom_typ3"/>
</dbReference>
<dbReference type="InterPro" id="IPR017451">
    <property type="entry name" value="F-box-assoc_interact_dom"/>
</dbReference>
<dbReference type="InterPro" id="IPR036047">
    <property type="entry name" value="F-box-like_dom_sf"/>
</dbReference>
<dbReference type="InterPro" id="IPR001810">
    <property type="entry name" value="F-box_dom"/>
</dbReference>
<dbReference type="NCBIfam" id="TIGR01640">
    <property type="entry name" value="F_box_assoc_1"/>
    <property type="match status" value="1"/>
</dbReference>
<dbReference type="PANTHER" id="PTHR31111">
    <property type="entry name" value="BNAA05G37150D PROTEIN-RELATED"/>
    <property type="match status" value="1"/>
</dbReference>
<dbReference type="PANTHER" id="PTHR31111:SF125">
    <property type="entry name" value="F-BOX PROTEIN CPR30-LIKE"/>
    <property type="match status" value="1"/>
</dbReference>
<dbReference type="Pfam" id="PF00646">
    <property type="entry name" value="F-box"/>
    <property type="match status" value="1"/>
</dbReference>
<dbReference type="Pfam" id="PF08268">
    <property type="entry name" value="FBA_3"/>
    <property type="match status" value="1"/>
</dbReference>
<dbReference type="SUPFAM" id="SSF81383">
    <property type="entry name" value="F-box domain"/>
    <property type="match status" value="1"/>
</dbReference>
<proteinExistence type="evidence at protein level"/>
<reference key="1">
    <citation type="journal article" date="1999" name="Nature">
        <title>Sequence and analysis of chromosome 4 of the plant Arabidopsis thaliana.</title>
        <authorList>
            <person name="Mayer K.F.X."/>
            <person name="Schueller C."/>
            <person name="Wambutt R."/>
            <person name="Murphy G."/>
            <person name="Volckaert G."/>
            <person name="Pohl T."/>
            <person name="Duesterhoeft A."/>
            <person name="Stiekema W."/>
            <person name="Entian K.-D."/>
            <person name="Terryn N."/>
            <person name="Harris B."/>
            <person name="Ansorge W."/>
            <person name="Brandt P."/>
            <person name="Grivell L.A."/>
            <person name="Rieger M."/>
            <person name="Weichselgartner M."/>
            <person name="de Simone V."/>
            <person name="Obermaier B."/>
            <person name="Mache R."/>
            <person name="Mueller M."/>
            <person name="Kreis M."/>
            <person name="Delseny M."/>
            <person name="Puigdomenech P."/>
            <person name="Watson M."/>
            <person name="Schmidtheini T."/>
            <person name="Reichert B."/>
            <person name="Portetelle D."/>
            <person name="Perez-Alonso M."/>
            <person name="Boutry M."/>
            <person name="Bancroft I."/>
            <person name="Vos P."/>
            <person name="Hoheisel J."/>
            <person name="Zimmermann W."/>
            <person name="Wedler H."/>
            <person name="Ridley P."/>
            <person name="Langham S.-A."/>
            <person name="McCullagh B."/>
            <person name="Bilham L."/>
            <person name="Robben J."/>
            <person name="van der Schueren J."/>
            <person name="Grymonprez B."/>
            <person name="Chuang Y.-J."/>
            <person name="Vandenbussche F."/>
            <person name="Braeken M."/>
            <person name="Weltjens I."/>
            <person name="Voet M."/>
            <person name="Bastiaens I."/>
            <person name="Aert R."/>
            <person name="Defoor E."/>
            <person name="Weitzenegger T."/>
            <person name="Bothe G."/>
            <person name="Ramsperger U."/>
            <person name="Hilbert H."/>
            <person name="Braun M."/>
            <person name="Holzer E."/>
            <person name="Brandt A."/>
            <person name="Peters S."/>
            <person name="van Staveren M."/>
            <person name="Dirkse W."/>
            <person name="Mooijman P."/>
            <person name="Klein Lankhorst R."/>
            <person name="Rose M."/>
            <person name="Hauf J."/>
            <person name="Koetter P."/>
            <person name="Berneiser S."/>
            <person name="Hempel S."/>
            <person name="Feldpausch M."/>
            <person name="Lamberth S."/>
            <person name="Van den Daele H."/>
            <person name="De Keyser A."/>
            <person name="Buysshaert C."/>
            <person name="Gielen J."/>
            <person name="Villarroel R."/>
            <person name="De Clercq R."/>
            <person name="van Montagu M."/>
            <person name="Rogers J."/>
            <person name="Cronin A."/>
            <person name="Quail M.A."/>
            <person name="Bray-Allen S."/>
            <person name="Clark L."/>
            <person name="Doggett J."/>
            <person name="Hall S."/>
            <person name="Kay M."/>
            <person name="Lennard N."/>
            <person name="McLay K."/>
            <person name="Mayes R."/>
            <person name="Pettett A."/>
            <person name="Rajandream M.A."/>
            <person name="Lyne M."/>
            <person name="Benes V."/>
            <person name="Rechmann S."/>
            <person name="Borkova D."/>
            <person name="Bloecker H."/>
            <person name="Scharfe M."/>
            <person name="Grimm M."/>
            <person name="Loehnert T.-H."/>
            <person name="Dose S."/>
            <person name="de Haan M."/>
            <person name="Maarse A.C."/>
            <person name="Schaefer M."/>
            <person name="Mueller-Auer S."/>
            <person name="Gabel C."/>
            <person name="Fuchs M."/>
            <person name="Fartmann B."/>
            <person name="Granderath K."/>
            <person name="Dauner D."/>
            <person name="Herzl A."/>
            <person name="Neumann S."/>
            <person name="Argiriou A."/>
            <person name="Vitale D."/>
            <person name="Liguori R."/>
            <person name="Piravandi E."/>
            <person name="Massenet O."/>
            <person name="Quigley F."/>
            <person name="Clabauld G."/>
            <person name="Muendlein A."/>
            <person name="Felber R."/>
            <person name="Schnabl S."/>
            <person name="Hiller R."/>
            <person name="Schmidt W."/>
            <person name="Lecharny A."/>
            <person name="Aubourg S."/>
            <person name="Chefdor F."/>
            <person name="Cooke R."/>
            <person name="Berger C."/>
            <person name="Monfort A."/>
            <person name="Casacuberta E."/>
            <person name="Gibbons T."/>
            <person name="Weber N."/>
            <person name="Vandenbol M."/>
            <person name="Bargues M."/>
            <person name="Terol J."/>
            <person name="Torres A."/>
            <person name="Perez-Perez A."/>
            <person name="Purnelle B."/>
            <person name="Bent E."/>
            <person name="Johnson S."/>
            <person name="Tacon D."/>
            <person name="Jesse T."/>
            <person name="Heijnen L."/>
            <person name="Schwarz S."/>
            <person name="Scholler P."/>
            <person name="Heber S."/>
            <person name="Francs P."/>
            <person name="Bielke C."/>
            <person name="Frishman D."/>
            <person name="Haase D."/>
            <person name="Lemcke K."/>
            <person name="Mewes H.-W."/>
            <person name="Stocker S."/>
            <person name="Zaccaria P."/>
            <person name="Bevan M."/>
            <person name="Wilson R.K."/>
            <person name="de la Bastide M."/>
            <person name="Habermann K."/>
            <person name="Parnell L."/>
            <person name="Dedhia N."/>
            <person name="Gnoj L."/>
            <person name="Schutz K."/>
            <person name="Huang E."/>
            <person name="Spiegel L."/>
            <person name="Sekhon M."/>
            <person name="Murray J."/>
            <person name="Sheet P."/>
            <person name="Cordes M."/>
            <person name="Abu-Threideh J."/>
            <person name="Stoneking T."/>
            <person name="Kalicki J."/>
            <person name="Graves T."/>
            <person name="Harmon G."/>
            <person name="Edwards J."/>
            <person name="Latreille P."/>
            <person name="Courtney L."/>
            <person name="Cloud J."/>
            <person name="Abbott A."/>
            <person name="Scott K."/>
            <person name="Johnson D."/>
            <person name="Minx P."/>
            <person name="Bentley D."/>
            <person name="Fulton B."/>
            <person name="Miller N."/>
            <person name="Greco T."/>
            <person name="Kemp K."/>
            <person name="Kramer J."/>
            <person name="Fulton L."/>
            <person name="Mardis E."/>
            <person name="Dante M."/>
            <person name="Pepin K."/>
            <person name="Hillier L.W."/>
            <person name="Nelson J."/>
            <person name="Spieth J."/>
            <person name="Ryan E."/>
            <person name="Andrews S."/>
            <person name="Geisel C."/>
            <person name="Layman D."/>
            <person name="Du H."/>
            <person name="Ali J."/>
            <person name="Berghoff A."/>
            <person name="Jones K."/>
            <person name="Drone K."/>
            <person name="Cotton M."/>
            <person name="Joshu C."/>
            <person name="Antonoiu B."/>
            <person name="Zidanic M."/>
            <person name="Strong C."/>
            <person name="Sun H."/>
            <person name="Lamar B."/>
            <person name="Yordan C."/>
            <person name="Ma P."/>
            <person name="Zhong J."/>
            <person name="Preston R."/>
            <person name="Vil D."/>
            <person name="Shekher M."/>
            <person name="Matero A."/>
            <person name="Shah R."/>
            <person name="Swaby I.K."/>
            <person name="O'Shaughnessy A."/>
            <person name="Rodriguez M."/>
            <person name="Hoffman J."/>
            <person name="Till S."/>
            <person name="Granat S."/>
            <person name="Shohdy N."/>
            <person name="Hasegawa A."/>
            <person name="Hameed A."/>
            <person name="Lodhi M."/>
            <person name="Johnson A."/>
            <person name="Chen E."/>
            <person name="Marra M.A."/>
            <person name="Martienssen R."/>
            <person name="McCombie W.R."/>
        </authorList>
    </citation>
    <scope>NUCLEOTIDE SEQUENCE [LARGE SCALE GENOMIC DNA]</scope>
    <source>
        <strain>cv. Columbia</strain>
    </source>
</reference>
<reference key="2">
    <citation type="journal article" date="2017" name="Plant J.">
        <title>Araport11: a complete reannotation of the Arabidopsis thaliana reference genome.</title>
        <authorList>
            <person name="Cheng C.Y."/>
            <person name="Krishnakumar V."/>
            <person name="Chan A.P."/>
            <person name="Thibaud-Nissen F."/>
            <person name="Schobel S."/>
            <person name="Town C.D."/>
        </authorList>
    </citation>
    <scope>GENOME REANNOTATION</scope>
    <source>
        <strain>cv. Columbia</strain>
    </source>
</reference>
<reference key="3">
    <citation type="journal article" date="2002" name="Proc. Natl. Acad. Sci. U.S.A.">
        <title>The F-box subunit of the SCF E3 complex is encoded by a diverse superfamily of genes in Arabidopsis.</title>
        <authorList>
            <person name="Gagne J.M."/>
            <person name="Downes B.P."/>
            <person name="Shiu S.-H."/>
            <person name="Durski A.M."/>
            <person name="Vierstra R.D."/>
        </authorList>
    </citation>
    <scope>INTERACTION WITH ASK16</scope>
</reference>
<reference key="4">
    <citation type="journal article" date="2009" name="J. Proteomics">
        <title>Phosphoproteomic analysis of nuclei-enriched fractions from Arabidopsis thaliana.</title>
        <authorList>
            <person name="Jones A.M.E."/>
            <person name="MacLean D."/>
            <person name="Studholme D.J."/>
            <person name="Serna-Sanz A."/>
            <person name="Andreasson E."/>
            <person name="Rathjen J.P."/>
            <person name="Peck S.C."/>
        </authorList>
    </citation>
    <scope>IDENTIFICATION BY MASS SPECTROMETRY [LARGE SCALE ANALYSIS]</scope>
    <source>
        <strain>cv. Columbia</strain>
    </source>
</reference>
<keyword id="KW-0539">Nucleus</keyword>
<keyword id="KW-1185">Reference proteome</keyword>
<keyword id="KW-0833">Ubl conjugation pathway</keyword>
<sequence>MTTSQFKKSKLIENNSQSLEILKEKNFNDVPLDVAIEIFMRLPVKSVARFLLLSKFWAEIIRSRHFITSFQVRSSLQPRLLVVFIDLNKQWNCEDWYFFSLSSSTTSYLSRVTCPFPDYVHYSHYVNGLISHGYGLEKFITNPSTGKSTVLGRVQTNSKVAQCFLGYDPVNDEYKLLVLCMKEKMQRHDGRTRILQLSSQHQVFPLGVKKKPWRMIDYTTPHGPVLNSVCIDGVLYYVAFTGEDLSQLSLMRFDLGSEKLDLFTSLPADFPAAFLHGFTLMRYKGKVALATKTLFIGIEVWVLDQQAEIHGWLKKSFSIKGVRRWLFCDLFITGTTHTGEFILAPRFYSNSFYVIYYNPDTKSLRKTKVEVHGGYDFKHRETKAMVFPDYVETVRLL</sequence>
<gene>
    <name type="ordered locus">At4g11590</name>
    <name type="ORF">T5C23.20</name>
</gene>
<accession>Q9T0C7</accession>
<comment type="function">
    <text evidence="1">Component of SCF(ASK-cullin-F-box) E3 ubiquitin ligase complexes, which may mediate the ubiquitination and subsequent proteasomal degradation of target proteins.</text>
</comment>
<comment type="pathway">
    <text>Protein modification; protein ubiquitination.</text>
</comment>
<comment type="subunit">
    <text evidence="1 2">Part of a SCF (ASK-cullin-F-box) protein ligase complex (By similarity). Interacts with ASK16.</text>
</comment>
<comment type="subcellular location">
    <subcellularLocation>
        <location evidence="1">Nucleus</location>
    </subcellularLocation>
</comment>
<comment type="domain">
    <text evidence="1">The F-box is necessary for the interaction with ASK proteins.</text>
</comment>